<keyword id="KW-0963">Cytoplasm</keyword>
<keyword id="KW-0342">GTP-binding</keyword>
<keyword id="KW-0378">Hydrolase</keyword>
<keyword id="KW-0460">Magnesium</keyword>
<keyword id="KW-0479">Metal-binding</keyword>
<keyword id="KW-0547">Nucleotide-binding</keyword>
<protein>
    <recommendedName>
        <fullName evidence="1">GTPase Obg</fullName>
        <ecNumber evidence="1">3.6.5.-</ecNumber>
    </recommendedName>
    <alternativeName>
        <fullName evidence="1">GTP-binding protein Obg</fullName>
    </alternativeName>
</protein>
<evidence type="ECO:0000255" key="1">
    <source>
        <dbReference type="HAMAP-Rule" id="MF_01454"/>
    </source>
</evidence>
<evidence type="ECO:0000255" key="2">
    <source>
        <dbReference type="PROSITE-ProRule" id="PRU01231"/>
    </source>
</evidence>
<name>OBG_NITV4</name>
<sequence>MRFVDEATINVRAGKGGNGCLSFRREKFIPRGGPDGGNGGDGGSVILRPTNRLLSLYDFRLQRNYEARNGQSGMGSQCDGRKGEDLVLELPLGTLVFEVDDEGHEQMIADLSDPDGVFVVARGGRGGKGNEHFKSSTMRAPRFAQKGEPGEERRLRLELKILADAGLLGLPNAGKSTFISRISAARPKIAAYPFTTLTPNLGVMIDEVDPDRRMVIADIPGLIEGAHTGQGLGHRFLKHVERTRFLVHILSIEDIDPENPWTGFDLINEELARFDEVLREREQIEVVNKIDLRTPEEVDALRQQAAQQGRRIFFISAMHGEGIEEVVDAMWRLRDTIDMHEPLVHLQEVEEEDEEFEDIEVVYTRE</sequence>
<organism>
    <name type="scientific">Nitratidesulfovibrio vulgaris (strain DP4)</name>
    <name type="common">Desulfovibrio vulgaris</name>
    <dbReference type="NCBI Taxonomy" id="391774"/>
    <lineage>
        <taxon>Bacteria</taxon>
        <taxon>Pseudomonadati</taxon>
        <taxon>Thermodesulfobacteriota</taxon>
        <taxon>Desulfovibrionia</taxon>
        <taxon>Desulfovibrionales</taxon>
        <taxon>Desulfovibrionaceae</taxon>
        <taxon>Nitratidesulfovibrio</taxon>
    </lineage>
</organism>
<reference key="1">
    <citation type="journal article" date="2009" name="Environ. Microbiol.">
        <title>Contribution of mobile genetic elements to Desulfovibrio vulgaris genome plasticity.</title>
        <authorList>
            <person name="Walker C.B."/>
            <person name="Stolyar S."/>
            <person name="Chivian D."/>
            <person name="Pinel N."/>
            <person name="Gabster J.A."/>
            <person name="Dehal P.S."/>
            <person name="He Z."/>
            <person name="Yang Z.K."/>
            <person name="Yen H.C."/>
            <person name="Zhou J."/>
            <person name="Wall J.D."/>
            <person name="Hazen T.C."/>
            <person name="Arkin A.P."/>
            <person name="Stahl D.A."/>
        </authorList>
    </citation>
    <scope>NUCLEOTIDE SEQUENCE [LARGE SCALE GENOMIC DNA]</scope>
    <source>
        <strain>DP4</strain>
    </source>
</reference>
<gene>
    <name evidence="1" type="primary">obg</name>
    <name type="ordered locus">Dvul_2056</name>
</gene>
<dbReference type="EC" id="3.6.5.-" evidence="1"/>
<dbReference type="EMBL" id="CP000527">
    <property type="protein sequence ID" value="ABM29072.1"/>
    <property type="molecule type" value="Genomic_DNA"/>
</dbReference>
<dbReference type="SMR" id="A1VF56"/>
<dbReference type="KEGG" id="dvl:Dvul_2056"/>
<dbReference type="HOGENOM" id="CLU_011747_2_0_7"/>
<dbReference type="Proteomes" id="UP000009173">
    <property type="component" value="Chromosome"/>
</dbReference>
<dbReference type="GO" id="GO:0005737">
    <property type="term" value="C:cytoplasm"/>
    <property type="evidence" value="ECO:0007669"/>
    <property type="project" value="UniProtKB-SubCell"/>
</dbReference>
<dbReference type="GO" id="GO:0005525">
    <property type="term" value="F:GTP binding"/>
    <property type="evidence" value="ECO:0007669"/>
    <property type="project" value="UniProtKB-UniRule"/>
</dbReference>
<dbReference type="GO" id="GO:0003924">
    <property type="term" value="F:GTPase activity"/>
    <property type="evidence" value="ECO:0007669"/>
    <property type="project" value="UniProtKB-UniRule"/>
</dbReference>
<dbReference type="GO" id="GO:0000287">
    <property type="term" value="F:magnesium ion binding"/>
    <property type="evidence" value="ECO:0007669"/>
    <property type="project" value="InterPro"/>
</dbReference>
<dbReference type="GO" id="GO:0042254">
    <property type="term" value="P:ribosome biogenesis"/>
    <property type="evidence" value="ECO:0007669"/>
    <property type="project" value="UniProtKB-UniRule"/>
</dbReference>
<dbReference type="CDD" id="cd01898">
    <property type="entry name" value="Obg"/>
    <property type="match status" value="1"/>
</dbReference>
<dbReference type="FunFam" id="2.70.210.12:FF:000001">
    <property type="entry name" value="GTPase Obg"/>
    <property type="match status" value="1"/>
</dbReference>
<dbReference type="Gene3D" id="2.70.210.12">
    <property type="entry name" value="GTP1/OBG domain"/>
    <property type="match status" value="1"/>
</dbReference>
<dbReference type="Gene3D" id="3.40.50.300">
    <property type="entry name" value="P-loop containing nucleotide triphosphate hydrolases"/>
    <property type="match status" value="1"/>
</dbReference>
<dbReference type="HAMAP" id="MF_01454">
    <property type="entry name" value="GTPase_Obg"/>
    <property type="match status" value="1"/>
</dbReference>
<dbReference type="InterPro" id="IPR031167">
    <property type="entry name" value="G_OBG"/>
</dbReference>
<dbReference type="InterPro" id="IPR006073">
    <property type="entry name" value="GTP-bd"/>
</dbReference>
<dbReference type="InterPro" id="IPR014100">
    <property type="entry name" value="GTP-bd_Obg/CgtA"/>
</dbReference>
<dbReference type="InterPro" id="IPR006074">
    <property type="entry name" value="GTP1-OBG_CS"/>
</dbReference>
<dbReference type="InterPro" id="IPR006169">
    <property type="entry name" value="GTP1_OBG_dom"/>
</dbReference>
<dbReference type="InterPro" id="IPR036726">
    <property type="entry name" value="GTP1_OBG_dom_sf"/>
</dbReference>
<dbReference type="InterPro" id="IPR045086">
    <property type="entry name" value="OBG_GTPase"/>
</dbReference>
<dbReference type="InterPro" id="IPR027417">
    <property type="entry name" value="P-loop_NTPase"/>
</dbReference>
<dbReference type="NCBIfam" id="TIGR02729">
    <property type="entry name" value="Obg_CgtA"/>
    <property type="match status" value="1"/>
</dbReference>
<dbReference type="NCBIfam" id="NF008955">
    <property type="entry name" value="PRK12297.1"/>
    <property type="match status" value="1"/>
</dbReference>
<dbReference type="NCBIfam" id="NF008956">
    <property type="entry name" value="PRK12299.1"/>
    <property type="match status" value="1"/>
</dbReference>
<dbReference type="PANTHER" id="PTHR11702">
    <property type="entry name" value="DEVELOPMENTALLY REGULATED GTP-BINDING PROTEIN-RELATED"/>
    <property type="match status" value="1"/>
</dbReference>
<dbReference type="PANTHER" id="PTHR11702:SF31">
    <property type="entry name" value="MITOCHONDRIAL RIBOSOME-ASSOCIATED GTPASE 2"/>
    <property type="match status" value="1"/>
</dbReference>
<dbReference type="Pfam" id="PF01018">
    <property type="entry name" value="GTP1_OBG"/>
    <property type="match status" value="1"/>
</dbReference>
<dbReference type="Pfam" id="PF01926">
    <property type="entry name" value="MMR_HSR1"/>
    <property type="match status" value="1"/>
</dbReference>
<dbReference type="PIRSF" id="PIRSF002401">
    <property type="entry name" value="GTP_bd_Obg/CgtA"/>
    <property type="match status" value="1"/>
</dbReference>
<dbReference type="PRINTS" id="PR00326">
    <property type="entry name" value="GTP1OBG"/>
</dbReference>
<dbReference type="SUPFAM" id="SSF82051">
    <property type="entry name" value="Obg GTP-binding protein N-terminal domain"/>
    <property type="match status" value="1"/>
</dbReference>
<dbReference type="SUPFAM" id="SSF52540">
    <property type="entry name" value="P-loop containing nucleoside triphosphate hydrolases"/>
    <property type="match status" value="1"/>
</dbReference>
<dbReference type="PROSITE" id="PS51710">
    <property type="entry name" value="G_OBG"/>
    <property type="match status" value="1"/>
</dbReference>
<dbReference type="PROSITE" id="PS00905">
    <property type="entry name" value="GTP1_OBG"/>
    <property type="match status" value="1"/>
</dbReference>
<dbReference type="PROSITE" id="PS51883">
    <property type="entry name" value="OBG"/>
    <property type="match status" value="1"/>
</dbReference>
<proteinExistence type="inferred from homology"/>
<feature type="chain" id="PRO_0000385893" description="GTPase Obg">
    <location>
        <begin position="1"/>
        <end position="366"/>
    </location>
</feature>
<feature type="domain" description="Obg" evidence="2">
    <location>
        <begin position="1"/>
        <end position="162"/>
    </location>
</feature>
<feature type="domain" description="OBG-type G" evidence="1">
    <location>
        <begin position="163"/>
        <end position="335"/>
    </location>
</feature>
<feature type="binding site" evidence="1">
    <location>
        <begin position="169"/>
        <end position="176"/>
    </location>
    <ligand>
        <name>GTP</name>
        <dbReference type="ChEBI" id="CHEBI:37565"/>
    </ligand>
</feature>
<feature type="binding site" evidence="1">
    <location>
        <position position="176"/>
    </location>
    <ligand>
        <name>Mg(2+)</name>
        <dbReference type="ChEBI" id="CHEBI:18420"/>
    </ligand>
</feature>
<feature type="binding site" evidence="1">
    <location>
        <begin position="194"/>
        <end position="198"/>
    </location>
    <ligand>
        <name>GTP</name>
        <dbReference type="ChEBI" id="CHEBI:37565"/>
    </ligand>
</feature>
<feature type="binding site" evidence="1">
    <location>
        <position position="196"/>
    </location>
    <ligand>
        <name>Mg(2+)</name>
        <dbReference type="ChEBI" id="CHEBI:18420"/>
    </ligand>
</feature>
<feature type="binding site" evidence="1">
    <location>
        <begin position="218"/>
        <end position="221"/>
    </location>
    <ligand>
        <name>GTP</name>
        <dbReference type="ChEBI" id="CHEBI:37565"/>
    </ligand>
</feature>
<feature type="binding site" evidence="1">
    <location>
        <begin position="288"/>
        <end position="291"/>
    </location>
    <ligand>
        <name>GTP</name>
        <dbReference type="ChEBI" id="CHEBI:37565"/>
    </ligand>
</feature>
<feature type="binding site" evidence="1">
    <location>
        <begin position="316"/>
        <end position="318"/>
    </location>
    <ligand>
        <name>GTP</name>
        <dbReference type="ChEBI" id="CHEBI:37565"/>
    </ligand>
</feature>
<comment type="function">
    <text evidence="1">An essential GTPase which binds GTP, GDP and possibly (p)ppGpp with moderate affinity, with high nucleotide exchange rates and a fairly low GTP hydrolysis rate. Plays a role in control of the cell cycle, stress response, ribosome biogenesis and in those bacteria that undergo differentiation, in morphogenesis control.</text>
</comment>
<comment type="cofactor">
    <cofactor evidence="1">
        <name>Mg(2+)</name>
        <dbReference type="ChEBI" id="CHEBI:18420"/>
    </cofactor>
</comment>
<comment type="subunit">
    <text evidence="1">Monomer.</text>
</comment>
<comment type="subcellular location">
    <subcellularLocation>
        <location evidence="1">Cytoplasm</location>
    </subcellularLocation>
</comment>
<comment type="similarity">
    <text evidence="1">Belongs to the TRAFAC class OBG-HflX-like GTPase superfamily. OBG GTPase family.</text>
</comment>
<accession>A1VF56</accession>